<sequence>MQVTRIIPDVPSFLASMMTFDTWSILFMVVQSLVIFLVVVIVAAMMIIYERRMLALWQDRYGPNRVGPFGSLQLVADMLKIFFKEDWTPNFTDKFMFTLAPAVAMFTALASFAIIPISPTLGVADWDIGILFFFAMAGIAVYAVLFGGWASANKFSLLGGLRSAAQTISYEVFLGLSLMGVVALTGSFNLRAIVEAQADGWYIIPQFFGFLTFVVAGVAVTHRHPFDQPEAEQELAEGYHVEYSGMKFGMFFIGEYVNVVLISALMTCLFFGGWLAPFNLDIPFIPPAFWFMIKTLFFMTMFVLARGSLMRPRYDQVMNFGWKVCLPVTLINLLVTAAVILIFSPTL</sequence>
<comment type="function">
    <text evidence="1">NDH-1 shuttles electrons from NADH, via FMN and iron-sulfur (Fe-S) centers, to quinones in the respiratory chain. The immediate electron acceptor for the enzyme in this species is believed to be ubiquinone. Couples the redox reaction to proton translocation (for every two electrons transferred, four hydrogen ions are translocated across the cytoplasmic membrane), and thus conserves the redox energy in a proton gradient. This subunit may bind ubiquinone.</text>
</comment>
<comment type="catalytic activity">
    <reaction evidence="1">
        <text>a quinone + NADH + 5 H(+)(in) = a quinol + NAD(+) + 4 H(+)(out)</text>
        <dbReference type="Rhea" id="RHEA:57888"/>
        <dbReference type="ChEBI" id="CHEBI:15378"/>
        <dbReference type="ChEBI" id="CHEBI:24646"/>
        <dbReference type="ChEBI" id="CHEBI:57540"/>
        <dbReference type="ChEBI" id="CHEBI:57945"/>
        <dbReference type="ChEBI" id="CHEBI:132124"/>
    </reaction>
</comment>
<comment type="subunit">
    <text evidence="1">NDH-1 is composed of 14 different subunits. Subunits NuoA, H, J, K, L, M, N constitute the membrane sector of the complex.</text>
</comment>
<comment type="subcellular location">
    <subcellularLocation>
        <location evidence="1">Cell inner membrane</location>
        <topology evidence="1">Multi-pass membrane protein</topology>
    </subcellularLocation>
</comment>
<comment type="similarity">
    <text evidence="1">Belongs to the complex I subunit 1 family.</text>
</comment>
<accession>Q1QD91</accession>
<protein>
    <recommendedName>
        <fullName evidence="1">NADH-quinone oxidoreductase subunit H</fullName>
        <ecNumber evidence="1">7.1.1.-</ecNumber>
    </recommendedName>
    <alternativeName>
        <fullName evidence="1">NADH dehydrogenase I subunit H</fullName>
    </alternativeName>
    <alternativeName>
        <fullName evidence="1">NDH-1 subunit H</fullName>
    </alternativeName>
</protein>
<proteinExistence type="inferred from homology"/>
<keyword id="KW-0997">Cell inner membrane</keyword>
<keyword id="KW-1003">Cell membrane</keyword>
<keyword id="KW-0472">Membrane</keyword>
<keyword id="KW-0520">NAD</keyword>
<keyword id="KW-0874">Quinone</keyword>
<keyword id="KW-1278">Translocase</keyword>
<keyword id="KW-0812">Transmembrane</keyword>
<keyword id="KW-1133">Transmembrane helix</keyword>
<keyword id="KW-0830">Ubiquinone</keyword>
<feature type="chain" id="PRO_0000244932" description="NADH-quinone oxidoreductase subunit H">
    <location>
        <begin position="1"/>
        <end position="347"/>
    </location>
</feature>
<feature type="transmembrane region" description="Helical" evidence="1">
    <location>
        <begin position="25"/>
        <end position="45"/>
    </location>
</feature>
<feature type="transmembrane region" description="Helical" evidence="1">
    <location>
        <begin position="95"/>
        <end position="115"/>
    </location>
</feature>
<feature type="transmembrane region" description="Helical" evidence="1">
    <location>
        <begin position="128"/>
        <end position="148"/>
    </location>
</feature>
<feature type="transmembrane region" description="Helical" evidence="1">
    <location>
        <begin position="168"/>
        <end position="188"/>
    </location>
</feature>
<feature type="transmembrane region" description="Helical" evidence="1">
    <location>
        <begin position="200"/>
        <end position="220"/>
    </location>
</feature>
<feature type="transmembrane region" description="Helical" evidence="1">
    <location>
        <begin position="251"/>
        <end position="271"/>
    </location>
</feature>
<feature type="transmembrane region" description="Helical" evidence="1">
    <location>
        <begin position="284"/>
        <end position="304"/>
    </location>
</feature>
<feature type="transmembrane region" description="Helical" evidence="1">
    <location>
        <begin position="324"/>
        <end position="344"/>
    </location>
</feature>
<gene>
    <name evidence="1" type="primary">nuoH</name>
    <name type="ordered locus">Pcryo_0579</name>
</gene>
<name>NUOH_PSYCK</name>
<organism>
    <name type="scientific">Psychrobacter cryohalolentis (strain ATCC BAA-1226 / DSM 17306 / VKM B-2378 / K5)</name>
    <dbReference type="NCBI Taxonomy" id="335284"/>
    <lineage>
        <taxon>Bacteria</taxon>
        <taxon>Pseudomonadati</taxon>
        <taxon>Pseudomonadota</taxon>
        <taxon>Gammaproteobacteria</taxon>
        <taxon>Moraxellales</taxon>
        <taxon>Moraxellaceae</taxon>
        <taxon>Psychrobacter</taxon>
    </lineage>
</organism>
<reference key="1">
    <citation type="submission" date="2006-03" db="EMBL/GenBank/DDBJ databases">
        <title>Complete sequence of chromosome of Psychrobacter cryohalolentis K5.</title>
        <authorList>
            <consortium name="US DOE Joint Genome Institute"/>
            <person name="Copeland A."/>
            <person name="Lucas S."/>
            <person name="Lapidus A."/>
            <person name="Barry K."/>
            <person name="Detter J.C."/>
            <person name="Glavina T."/>
            <person name="Hammon N."/>
            <person name="Israni S."/>
            <person name="Dalin E."/>
            <person name="Tice H."/>
            <person name="Pitluck S."/>
            <person name="Brettin T."/>
            <person name="Bruce D."/>
            <person name="Han C."/>
            <person name="Tapia R."/>
            <person name="Sims D.R."/>
            <person name="Gilna P."/>
            <person name="Schmutz J."/>
            <person name="Larimer F."/>
            <person name="Land M."/>
            <person name="Hauser L."/>
            <person name="Kyrpides N."/>
            <person name="Kim E."/>
            <person name="Richardson P."/>
        </authorList>
    </citation>
    <scope>NUCLEOTIDE SEQUENCE [LARGE SCALE GENOMIC DNA]</scope>
    <source>
        <strain>ATCC BAA-1226 / DSM 17306 / VKM B-2378 / K5</strain>
    </source>
</reference>
<evidence type="ECO:0000255" key="1">
    <source>
        <dbReference type="HAMAP-Rule" id="MF_01350"/>
    </source>
</evidence>
<dbReference type="EC" id="7.1.1.-" evidence="1"/>
<dbReference type="EMBL" id="CP000323">
    <property type="protein sequence ID" value="ABE74362.1"/>
    <property type="molecule type" value="Genomic_DNA"/>
</dbReference>
<dbReference type="SMR" id="Q1QD91"/>
<dbReference type="STRING" id="335284.Pcryo_0579"/>
<dbReference type="KEGG" id="pcr:Pcryo_0579"/>
<dbReference type="eggNOG" id="COG1005">
    <property type="taxonomic scope" value="Bacteria"/>
</dbReference>
<dbReference type="HOGENOM" id="CLU_015134_0_1_6"/>
<dbReference type="Proteomes" id="UP000002425">
    <property type="component" value="Chromosome"/>
</dbReference>
<dbReference type="GO" id="GO:0005886">
    <property type="term" value="C:plasma membrane"/>
    <property type="evidence" value="ECO:0007669"/>
    <property type="project" value="UniProtKB-SubCell"/>
</dbReference>
<dbReference type="GO" id="GO:0003954">
    <property type="term" value="F:NADH dehydrogenase activity"/>
    <property type="evidence" value="ECO:0007669"/>
    <property type="project" value="TreeGrafter"/>
</dbReference>
<dbReference type="GO" id="GO:0016655">
    <property type="term" value="F:oxidoreductase activity, acting on NAD(P)H, quinone or similar compound as acceptor"/>
    <property type="evidence" value="ECO:0007669"/>
    <property type="project" value="UniProtKB-UniRule"/>
</dbReference>
<dbReference type="GO" id="GO:0048038">
    <property type="term" value="F:quinone binding"/>
    <property type="evidence" value="ECO:0007669"/>
    <property type="project" value="UniProtKB-KW"/>
</dbReference>
<dbReference type="GO" id="GO:0009060">
    <property type="term" value="P:aerobic respiration"/>
    <property type="evidence" value="ECO:0007669"/>
    <property type="project" value="TreeGrafter"/>
</dbReference>
<dbReference type="HAMAP" id="MF_01350">
    <property type="entry name" value="NDH1_NuoH"/>
    <property type="match status" value="1"/>
</dbReference>
<dbReference type="InterPro" id="IPR001694">
    <property type="entry name" value="NADH_UbQ_OxRdtase_su1/FPO"/>
</dbReference>
<dbReference type="InterPro" id="IPR018086">
    <property type="entry name" value="NADH_UbQ_OxRdtase_su1_CS"/>
</dbReference>
<dbReference type="NCBIfam" id="NF004740">
    <property type="entry name" value="PRK06076.1-1"/>
    <property type="match status" value="1"/>
</dbReference>
<dbReference type="NCBIfam" id="NF004741">
    <property type="entry name" value="PRK06076.1-2"/>
    <property type="match status" value="1"/>
</dbReference>
<dbReference type="PANTHER" id="PTHR11432">
    <property type="entry name" value="NADH DEHYDROGENASE SUBUNIT 1"/>
    <property type="match status" value="1"/>
</dbReference>
<dbReference type="PANTHER" id="PTHR11432:SF3">
    <property type="entry name" value="NADH-UBIQUINONE OXIDOREDUCTASE CHAIN 1"/>
    <property type="match status" value="1"/>
</dbReference>
<dbReference type="Pfam" id="PF00146">
    <property type="entry name" value="NADHdh"/>
    <property type="match status" value="1"/>
</dbReference>
<dbReference type="PROSITE" id="PS00667">
    <property type="entry name" value="COMPLEX1_ND1_1"/>
    <property type="match status" value="1"/>
</dbReference>
<dbReference type="PROSITE" id="PS00668">
    <property type="entry name" value="COMPLEX1_ND1_2"/>
    <property type="match status" value="1"/>
</dbReference>